<feature type="chain" id="PRO_0000341664" description="S-formylglutathione hydrolase FrmB">
    <location>
        <begin position="1"/>
        <end position="277"/>
    </location>
</feature>
<feature type="active site" description="Charge relay system" evidence="1">
    <location>
        <position position="145"/>
    </location>
</feature>
<feature type="active site" description="Charge relay system" evidence="1">
    <location>
        <position position="221"/>
    </location>
</feature>
<feature type="active site" description="Charge relay system" evidence="1">
    <location>
        <position position="254"/>
    </location>
</feature>
<evidence type="ECO:0000250" key="1"/>
<evidence type="ECO:0000305" key="2"/>
<dbReference type="EC" id="3.1.2.12"/>
<dbReference type="EMBL" id="CP000038">
    <property type="protein sequence ID" value="AAZ87111.1"/>
    <property type="molecule type" value="Genomic_DNA"/>
</dbReference>
<dbReference type="SMR" id="Q3Z551"/>
<dbReference type="ESTHER" id="shiss-yaim">
    <property type="family name" value="A85-EsteraseD-FGH"/>
</dbReference>
<dbReference type="KEGG" id="ssn:SSON_0334"/>
<dbReference type="HOGENOM" id="CLU_056472_0_0_6"/>
<dbReference type="Proteomes" id="UP000002529">
    <property type="component" value="Chromosome"/>
</dbReference>
<dbReference type="GO" id="GO:0005829">
    <property type="term" value="C:cytosol"/>
    <property type="evidence" value="ECO:0007669"/>
    <property type="project" value="TreeGrafter"/>
</dbReference>
<dbReference type="GO" id="GO:0052689">
    <property type="term" value="F:carboxylic ester hydrolase activity"/>
    <property type="evidence" value="ECO:0007669"/>
    <property type="project" value="UniProtKB-KW"/>
</dbReference>
<dbReference type="GO" id="GO:0018738">
    <property type="term" value="F:S-formylglutathione hydrolase activity"/>
    <property type="evidence" value="ECO:0007669"/>
    <property type="project" value="UniProtKB-EC"/>
</dbReference>
<dbReference type="GO" id="GO:0046294">
    <property type="term" value="P:formaldehyde catabolic process"/>
    <property type="evidence" value="ECO:0007669"/>
    <property type="project" value="InterPro"/>
</dbReference>
<dbReference type="FunFam" id="3.40.50.1820:FF:000002">
    <property type="entry name" value="S-formylglutathione hydrolase"/>
    <property type="match status" value="1"/>
</dbReference>
<dbReference type="Gene3D" id="3.40.50.1820">
    <property type="entry name" value="alpha/beta hydrolase"/>
    <property type="match status" value="1"/>
</dbReference>
<dbReference type="InterPro" id="IPR029058">
    <property type="entry name" value="AB_hydrolase_fold"/>
</dbReference>
<dbReference type="InterPro" id="IPR000801">
    <property type="entry name" value="Esterase-like"/>
</dbReference>
<dbReference type="InterPro" id="IPR014186">
    <property type="entry name" value="S-formylglutathione_hydrol"/>
</dbReference>
<dbReference type="NCBIfam" id="TIGR02821">
    <property type="entry name" value="fghA_ester_D"/>
    <property type="match status" value="1"/>
</dbReference>
<dbReference type="PANTHER" id="PTHR10061">
    <property type="entry name" value="S-FORMYLGLUTATHIONE HYDROLASE"/>
    <property type="match status" value="1"/>
</dbReference>
<dbReference type="PANTHER" id="PTHR10061:SF0">
    <property type="entry name" value="S-FORMYLGLUTATHIONE HYDROLASE"/>
    <property type="match status" value="1"/>
</dbReference>
<dbReference type="Pfam" id="PF00756">
    <property type="entry name" value="Esterase"/>
    <property type="match status" value="1"/>
</dbReference>
<dbReference type="SUPFAM" id="SSF53474">
    <property type="entry name" value="alpha/beta-Hydrolases"/>
    <property type="match status" value="1"/>
</dbReference>
<organism>
    <name type="scientific">Shigella sonnei (strain Ss046)</name>
    <dbReference type="NCBI Taxonomy" id="300269"/>
    <lineage>
        <taxon>Bacteria</taxon>
        <taxon>Pseudomonadati</taxon>
        <taxon>Pseudomonadota</taxon>
        <taxon>Gammaproteobacteria</taxon>
        <taxon>Enterobacterales</taxon>
        <taxon>Enterobacteriaceae</taxon>
        <taxon>Shigella</taxon>
    </lineage>
</organism>
<comment type="function">
    <text evidence="1">Serine hydrolase involved in the detoxification of formaldehyde. Hydrolyzes S-formylglutathione to glutathione and formate (By similarity).</text>
</comment>
<comment type="catalytic activity">
    <reaction>
        <text>S-formylglutathione + H2O = formate + glutathione + H(+)</text>
        <dbReference type="Rhea" id="RHEA:14961"/>
        <dbReference type="ChEBI" id="CHEBI:15377"/>
        <dbReference type="ChEBI" id="CHEBI:15378"/>
        <dbReference type="ChEBI" id="CHEBI:15740"/>
        <dbReference type="ChEBI" id="CHEBI:57688"/>
        <dbReference type="ChEBI" id="CHEBI:57925"/>
        <dbReference type="EC" id="3.1.2.12"/>
    </reaction>
</comment>
<comment type="similarity">
    <text evidence="2">Belongs to the esterase D family.</text>
</comment>
<protein>
    <recommendedName>
        <fullName>S-formylglutathione hydrolase FrmB</fullName>
        <shortName>FGH</shortName>
        <ecNumber>3.1.2.12</ecNumber>
    </recommendedName>
</protein>
<proteinExistence type="inferred from homology"/>
<name>SFGH1_SHISS</name>
<gene>
    <name type="primary">frmB</name>
    <name type="ordered locus">SSON_0334</name>
</gene>
<sequence length="277" mass="31399">MELIEKHASFGGWQNVYRHYSQSLKCEMNVGVYLPPKAANEKLPVLYWLSGLTCNEQNFITKSGMQRYAAEHNIIVVAPDTSPRGSHVADADRYDLGQGAGFYLNATQAPWNEHYKMYDYIRNELPDLVMQHFPATTRKSISGHSMGGLGALVLALRNPDEYVSVSAFSPIVSPSQVPWGQQAFAAYLGENKDAWLDYDPVSLISQGQRVAEIMVDQGLSDDFYAEQLRTPNLEKICQEMNIKTLIRYHEGYDHSYYFVSSFIGEHIAYHANKLNMR</sequence>
<reference key="1">
    <citation type="journal article" date="2005" name="Nucleic Acids Res.">
        <title>Genome dynamics and diversity of Shigella species, the etiologic agents of bacillary dysentery.</title>
        <authorList>
            <person name="Yang F."/>
            <person name="Yang J."/>
            <person name="Zhang X."/>
            <person name="Chen L."/>
            <person name="Jiang Y."/>
            <person name="Yan Y."/>
            <person name="Tang X."/>
            <person name="Wang J."/>
            <person name="Xiong Z."/>
            <person name="Dong J."/>
            <person name="Xue Y."/>
            <person name="Zhu Y."/>
            <person name="Xu X."/>
            <person name="Sun L."/>
            <person name="Chen S."/>
            <person name="Nie H."/>
            <person name="Peng J."/>
            <person name="Xu J."/>
            <person name="Wang Y."/>
            <person name="Yuan Z."/>
            <person name="Wen Y."/>
            <person name="Yao Z."/>
            <person name="Shen Y."/>
            <person name="Qiang B."/>
            <person name="Hou Y."/>
            <person name="Yu J."/>
            <person name="Jin Q."/>
        </authorList>
    </citation>
    <scope>NUCLEOTIDE SEQUENCE [LARGE SCALE GENOMIC DNA]</scope>
    <source>
        <strain>Ss046</strain>
    </source>
</reference>
<keyword id="KW-0378">Hydrolase</keyword>
<keyword id="KW-1185">Reference proteome</keyword>
<keyword id="KW-0719">Serine esterase</keyword>
<accession>Q3Z551</accession>